<sequence>MGTRKFFLLHHDKIIRSIIMANGIKNYWQDDGRFDRCSEIFFLSQKQGRGLYRFWLGNKKQGNRD</sequence>
<comment type="function">
    <text>Probably facilitates nickel incorporation. May constitute a multicomponent high-affinity nickel transporter. Not essential for the expression of catalytically active urease.</text>
</comment>
<accession>Q07415</accession>
<protein>
    <recommendedName>
        <fullName>Urease accessory protein UreI</fullName>
    </recommendedName>
</protein>
<keyword id="KW-0533">Nickel</keyword>
<feature type="chain" id="PRO_0000067679" description="Urease accessory protein UreI">
    <location>
        <begin position="1"/>
        <end position="65"/>
    </location>
</feature>
<name>UREI_BACSB</name>
<organism>
    <name type="scientific">Bacillus sp. (strain TB-90)</name>
    <dbReference type="NCBI Taxonomy" id="36824"/>
    <lineage>
        <taxon>Bacteria</taxon>
        <taxon>Bacillati</taxon>
        <taxon>Bacillota</taxon>
        <taxon>Bacilli</taxon>
        <taxon>Bacillales</taxon>
        <taxon>Bacillaceae</taxon>
        <taxon>Bacillus</taxon>
    </lineage>
</organism>
<gene>
    <name type="primary">ureI</name>
</gene>
<reference key="1">
    <citation type="journal article" date="1994" name="J. Bacteriol.">
        <title>Cloning, sequencing, and expression of thermophilic Bacillus sp. strain TB-90 urease gene complex in Escherichia coli.</title>
        <authorList>
            <person name="Maeda M."/>
            <person name="Hidaka M."/>
            <person name="Nakamura A."/>
            <person name="Masaki H."/>
            <person name="Uozumi T."/>
        </authorList>
    </citation>
    <scope>NUCLEOTIDE SEQUENCE [GENOMIC DNA]</scope>
</reference>
<dbReference type="EMBL" id="D14439">
    <property type="protein sequence ID" value="BAA03331.1"/>
    <property type="molecule type" value="Genomic_DNA"/>
</dbReference>
<dbReference type="PIR" id="I36950">
    <property type="entry name" value="I36950"/>
</dbReference>
<proteinExistence type="predicted"/>